<sequence>METLTAISRWLAKQHVVTWCVQQEGELWCANAFYLFDAQKVAFYILTEEKTRHAQMSGPQAAVAGTVNGQPKTVALIRGVQFKGEIRRLEGEESERARQAYNRRFPVARMLSAPVWEIRLDEIKFTDNTLGFGKKMIWLRNSGTEQA</sequence>
<accession>B1LFQ5</accession>
<gene>
    <name evidence="1" type="primary">yhbP</name>
    <name type="ordered locus">EcSMS35_3448</name>
</gene>
<feature type="chain" id="PRO_1000198353" description="UPF0306 protein YhbP">
    <location>
        <begin position="1"/>
        <end position="147"/>
    </location>
</feature>
<evidence type="ECO:0000255" key="1">
    <source>
        <dbReference type="HAMAP-Rule" id="MF_00764"/>
    </source>
</evidence>
<organism>
    <name type="scientific">Escherichia coli (strain SMS-3-5 / SECEC)</name>
    <dbReference type="NCBI Taxonomy" id="439855"/>
    <lineage>
        <taxon>Bacteria</taxon>
        <taxon>Pseudomonadati</taxon>
        <taxon>Pseudomonadota</taxon>
        <taxon>Gammaproteobacteria</taxon>
        <taxon>Enterobacterales</taxon>
        <taxon>Enterobacteriaceae</taxon>
        <taxon>Escherichia</taxon>
    </lineage>
</organism>
<dbReference type="EMBL" id="CP000970">
    <property type="protein sequence ID" value="ACB18216.1"/>
    <property type="molecule type" value="Genomic_DNA"/>
</dbReference>
<dbReference type="RefSeq" id="WP_000449459.1">
    <property type="nucleotide sequence ID" value="NC_010498.1"/>
</dbReference>
<dbReference type="SMR" id="B1LFQ5"/>
<dbReference type="KEGG" id="ecm:EcSMS35_3448"/>
<dbReference type="HOGENOM" id="CLU_105087_3_0_6"/>
<dbReference type="Proteomes" id="UP000007011">
    <property type="component" value="Chromosome"/>
</dbReference>
<dbReference type="FunFam" id="2.30.110.10:FF:000003">
    <property type="entry name" value="UPF0306 protein YhbP"/>
    <property type="match status" value="1"/>
</dbReference>
<dbReference type="Gene3D" id="2.30.110.10">
    <property type="entry name" value="Electron Transport, Fmn-binding Protein, Chain A"/>
    <property type="match status" value="1"/>
</dbReference>
<dbReference type="HAMAP" id="MF_00764">
    <property type="entry name" value="UPF0306"/>
    <property type="match status" value="1"/>
</dbReference>
<dbReference type="InterPro" id="IPR012349">
    <property type="entry name" value="Split_barrel_FMN-bd"/>
</dbReference>
<dbReference type="InterPro" id="IPR011194">
    <property type="entry name" value="UPF0306"/>
</dbReference>
<dbReference type="NCBIfam" id="NF002900">
    <property type="entry name" value="PRK03467.1"/>
    <property type="match status" value="1"/>
</dbReference>
<dbReference type="PIRSF" id="PIRSF009554">
    <property type="entry name" value="UCP009554"/>
    <property type="match status" value="1"/>
</dbReference>
<dbReference type="SUPFAM" id="SSF50475">
    <property type="entry name" value="FMN-binding split barrel"/>
    <property type="match status" value="1"/>
</dbReference>
<name>YHBP_ECOSM</name>
<reference key="1">
    <citation type="journal article" date="2008" name="J. Bacteriol.">
        <title>Insights into the environmental resistance gene pool from the genome sequence of the multidrug-resistant environmental isolate Escherichia coli SMS-3-5.</title>
        <authorList>
            <person name="Fricke W.F."/>
            <person name="Wright M.S."/>
            <person name="Lindell A.H."/>
            <person name="Harkins D.M."/>
            <person name="Baker-Austin C."/>
            <person name="Ravel J."/>
            <person name="Stepanauskas R."/>
        </authorList>
    </citation>
    <scope>NUCLEOTIDE SEQUENCE [LARGE SCALE GENOMIC DNA]</scope>
    <source>
        <strain>SMS-3-5 / SECEC</strain>
    </source>
</reference>
<proteinExistence type="inferred from homology"/>
<comment type="similarity">
    <text evidence="1">Belongs to the UPF0306 family.</text>
</comment>
<protein>
    <recommendedName>
        <fullName evidence="1">UPF0306 protein YhbP</fullName>
    </recommendedName>
</protein>